<reference evidence="13" key="1">
    <citation type="journal article" date="1987" name="Differentiation">
        <title>An unusual type-II 70-kilodalton keratin protein of mouse epidermis exhibiting postnatal body-site specificity and sensitivity to hyperproliferation.</title>
        <authorList>
            <person name="Rentrop M."/>
            <person name="Nischt R."/>
            <person name="Knapp B."/>
            <person name="Schweizer J."/>
            <person name="Winter H."/>
        </authorList>
    </citation>
    <scope>NUCLEOTIDE SEQUENCE [MRNA]</scope>
    <scope>TISSUE SPECIFICITY</scope>
    <scope>DEVELOPMENTAL STAGE</scope>
    <source>
        <strain evidence="8">NMRI</strain>
        <tissue evidence="8">Foot sole tissue</tissue>
    </source>
</reference>
<reference evidence="13 17" key="2">
    <citation type="journal article" date="1994" name="J. Invest. Dermatol.">
        <title>The large type II 70-kDa keratin of mouse epidermis is the ortholog of human keratin K2e.</title>
        <authorList>
            <person name="Herzog F."/>
            <person name="Winter H."/>
            <person name="Schweizer J."/>
        </authorList>
    </citation>
    <scope>NUCLEOTIDE SEQUENCE [MRNA]</scope>
    <scope>TISSUE SPECIFICITY</scope>
    <source>
        <strain evidence="17">NMRI</strain>
    </source>
</reference>
<reference evidence="15" key="3">
    <citation type="journal article" date="2005" name="Science">
        <title>The transcriptional landscape of the mammalian genome.</title>
        <authorList>
            <person name="Carninci P."/>
            <person name="Kasukawa T."/>
            <person name="Katayama S."/>
            <person name="Gough J."/>
            <person name="Frith M.C."/>
            <person name="Maeda N."/>
            <person name="Oyama R."/>
            <person name="Ravasi T."/>
            <person name="Lenhard B."/>
            <person name="Wells C."/>
            <person name="Kodzius R."/>
            <person name="Shimokawa K."/>
            <person name="Bajic V.B."/>
            <person name="Brenner S.E."/>
            <person name="Batalov S."/>
            <person name="Forrest A.R."/>
            <person name="Zavolan M."/>
            <person name="Davis M.J."/>
            <person name="Wilming L.G."/>
            <person name="Aidinis V."/>
            <person name="Allen J.E."/>
            <person name="Ambesi-Impiombato A."/>
            <person name="Apweiler R."/>
            <person name="Aturaliya R.N."/>
            <person name="Bailey T.L."/>
            <person name="Bansal M."/>
            <person name="Baxter L."/>
            <person name="Beisel K.W."/>
            <person name="Bersano T."/>
            <person name="Bono H."/>
            <person name="Chalk A.M."/>
            <person name="Chiu K.P."/>
            <person name="Choudhary V."/>
            <person name="Christoffels A."/>
            <person name="Clutterbuck D.R."/>
            <person name="Crowe M.L."/>
            <person name="Dalla E."/>
            <person name="Dalrymple B.P."/>
            <person name="de Bono B."/>
            <person name="Della Gatta G."/>
            <person name="di Bernardo D."/>
            <person name="Down T."/>
            <person name="Engstrom P."/>
            <person name="Fagiolini M."/>
            <person name="Faulkner G."/>
            <person name="Fletcher C.F."/>
            <person name="Fukushima T."/>
            <person name="Furuno M."/>
            <person name="Futaki S."/>
            <person name="Gariboldi M."/>
            <person name="Georgii-Hemming P."/>
            <person name="Gingeras T.R."/>
            <person name="Gojobori T."/>
            <person name="Green R.E."/>
            <person name="Gustincich S."/>
            <person name="Harbers M."/>
            <person name="Hayashi Y."/>
            <person name="Hensch T.K."/>
            <person name="Hirokawa N."/>
            <person name="Hill D."/>
            <person name="Huminiecki L."/>
            <person name="Iacono M."/>
            <person name="Ikeo K."/>
            <person name="Iwama A."/>
            <person name="Ishikawa T."/>
            <person name="Jakt M."/>
            <person name="Kanapin A."/>
            <person name="Katoh M."/>
            <person name="Kawasawa Y."/>
            <person name="Kelso J."/>
            <person name="Kitamura H."/>
            <person name="Kitano H."/>
            <person name="Kollias G."/>
            <person name="Krishnan S.P."/>
            <person name="Kruger A."/>
            <person name="Kummerfeld S.K."/>
            <person name="Kurochkin I.V."/>
            <person name="Lareau L.F."/>
            <person name="Lazarevic D."/>
            <person name="Lipovich L."/>
            <person name="Liu J."/>
            <person name="Liuni S."/>
            <person name="McWilliam S."/>
            <person name="Madan Babu M."/>
            <person name="Madera M."/>
            <person name="Marchionni L."/>
            <person name="Matsuda H."/>
            <person name="Matsuzawa S."/>
            <person name="Miki H."/>
            <person name="Mignone F."/>
            <person name="Miyake S."/>
            <person name="Morris K."/>
            <person name="Mottagui-Tabar S."/>
            <person name="Mulder N."/>
            <person name="Nakano N."/>
            <person name="Nakauchi H."/>
            <person name="Ng P."/>
            <person name="Nilsson R."/>
            <person name="Nishiguchi S."/>
            <person name="Nishikawa S."/>
            <person name="Nori F."/>
            <person name="Ohara O."/>
            <person name="Okazaki Y."/>
            <person name="Orlando V."/>
            <person name="Pang K.C."/>
            <person name="Pavan W.J."/>
            <person name="Pavesi G."/>
            <person name="Pesole G."/>
            <person name="Petrovsky N."/>
            <person name="Piazza S."/>
            <person name="Reed J."/>
            <person name="Reid J.F."/>
            <person name="Ring B.Z."/>
            <person name="Ringwald M."/>
            <person name="Rost B."/>
            <person name="Ruan Y."/>
            <person name="Salzberg S.L."/>
            <person name="Sandelin A."/>
            <person name="Schneider C."/>
            <person name="Schoenbach C."/>
            <person name="Sekiguchi K."/>
            <person name="Semple C.A."/>
            <person name="Seno S."/>
            <person name="Sessa L."/>
            <person name="Sheng Y."/>
            <person name="Shibata Y."/>
            <person name="Shimada H."/>
            <person name="Shimada K."/>
            <person name="Silva D."/>
            <person name="Sinclair B."/>
            <person name="Sperling S."/>
            <person name="Stupka E."/>
            <person name="Sugiura K."/>
            <person name="Sultana R."/>
            <person name="Takenaka Y."/>
            <person name="Taki K."/>
            <person name="Tammoja K."/>
            <person name="Tan S.L."/>
            <person name="Tang S."/>
            <person name="Taylor M.S."/>
            <person name="Tegner J."/>
            <person name="Teichmann S.A."/>
            <person name="Ueda H.R."/>
            <person name="van Nimwegen E."/>
            <person name="Verardo R."/>
            <person name="Wei C.L."/>
            <person name="Yagi K."/>
            <person name="Yamanishi H."/>
            <person name="Zabarovsky E."/>
            <person name="Zhu S."/>
            <person name="Zimmer A."/>
            <person name="Hide W."/>
            <person name="Bult C."/>
            <person name="Grimmond S.M."/>
            <person name="Teasdale R.D."/>
            <person name="Liu E.T."/>
            <person name="Brusic V."/>
            <person name="Quackenbush J."/>
            <person name="Wahlestedt C."/>
            <person name="Mattick J.S."/>
            <person name="Hume D.A."/>
            <person name="Kai C."/>
            <person name="Sasaki D."/>
            <person name="Tomaru Y."/>
            <person name="Fukuda S."/>
            <person name="Kanamori-Katayama M."/>
            <person name="Suzuki M."/>
            <person name="Aoki J."/>
            <person name="Arakawa T."/>
            <person name="Iida J."/>
            <person name="Imamura K."/>
            <person name="Itoh M."/>
            <person name="Kato T."/>
            <person name="Kawaji H."/>
            <person name="Kawagashira N."/>
            <person name="Kawashima T."/>
            <person name="Kojima M."/>
            <person name="Kondo S."/>
            <person name="Konno H."/>
            <person name="Nakano K."/>
            <person name="Ninomiya N."/>
            <person name="Nishio T."/>
            <person name="Okada M."/>
            <person name="Plessy C."/>
            <person name="Shibata K."/>
            <person name="Shiraki T."/>
            <person name="Suzuki S."/>
            <person name="Tagami M."/>
            <person name="Waki K."/>
            <person name="Watahiki A."/>
            <person name="Okamura-Oho Y."/>
            <person name="Suzuki H."/>
            <person name="Kawai J."/>
            <person name="Hayashizaki Y."/>
        </authorList>
    </citation>
    <scope>NUCLEOTIDE SEQUENCE [LARGE SCALE MRNA]</scope>
    <source>
        <strain evidence="16">C57BL/6J</strain>
        <tissue evidence="16">Skin</tissue>
    </source>
</reference>
<reference evidence="14" key="4">
    <citation type="journal article" date="2004" name="Genome Res.">
        <title>The status, quality, and expansion of the NIH full-length cDNA project: the Mammalian Gene Collection (MGC).</title>
        <authorList>
            <consortium name="The MGC Project Team"/>
        </authorList>
    </citation>
    <scope>NUCLEOTIDE SEQUENCE [LARGE SCALE MRNA]</scope>
    <source>
        <tissue evidence="14">Brain</tissue>
    </source>
</reference>
<reference key="5">
    <citation type="submission" date="2009-01" db="UniProtKB">
        <authorList>
            <person name="Lubec G."/>
            <person name="Sunyer B."/>
            <person name="Chen W.-Q."/>
        </authorList>
    </citation>
    <scope>PROTEIN SEQUENCE OF 23-36; 210-216; 288-296 AND 483-491</scope>
    <scope>IDENTIFICATION BY MASS SPECTROMETRY</scope>
    <source>
        <strain>OF1</strain>
        <tissue>Hippocampus</tissue>
    </source>
</reference>
<reference evidence="13" key="6">
    <citation type="journal article" date="1997" name="J. Cell Sci.">
        <title>Out of balance: consequences of a partial keratin 10 knockout.</title>
        <authorList>
            <person name="Reichelt J."/>
            <person name="Bauer C."/>
            <person name="Porter R."/>
            <person name="Lane E."/>
            <person name="Magin V."/>
        </authorList>
    </citation>
    <scope>INTERACTION WITH KRT10</scope>
</reference>
<reference evidence="13" key="7">
    <citation type="journal article" date="2004" name="Cells Tissues Organs">
        <title>Keratin 2e: a marker for murine nipple epidermis.</title>
        <authorList>
            <person name="Mahler B."/>
            <person name="Gocken T."/>
            <person name="Brojan M."/>
            <person name="Childress S."/>
            <person name="Spandau D.F."/>
            <person name="Foley J."/>
        </authorList>
    </citation>
    <scope>TISSUE SPECIFICITY</scope>
</reference>
<reference key="8">
    <citation type="journal article" date="2010" name="Cell">
        <title>A tissue-specific atlas of mouse protein phosphorylation and expression.</title>
        <authorList>
            <person name="Huttlin E.L."/>
            <person name="Jedrychowski M.P."/>
            <person name="Elias J.E."/>
            <person name="Goswami T."/>
            <person name="Rad R."/>
            <person name="Beausoleil S.A."/>
            <person name="Villen J."/>
            <person name="Haas W."/>
            <person name="Sowa M.E."/>
            <person name="Gygi S.P."/>
        </authorList>
    </citation>
    <scope>IDENTIFICATION BY MASS SPECTROMETRY [LARGE SCALE ANALYSIS]</scope>
    <source>
        <tissue>Brain</tissue>
        <tissue>Brown adipose tissue</tissue>
        <tissue>Heart</tissue>
        <tissue>Kidney</tissue>
        <tissue>Liver</tissue>
        <tissue>Lung</tissue>
        <tissue>Pancreas</tissue>
        <tissue>Spleen</tissue>
        <tissue>Testis</tissue>
    </source>
</reference>
<reference key="9">
    <citation type="journal article" date="2014" name="J. Invest. Dermatol.">
        <title>Loss of keratin K2 expression causes aberrant aggregation of K10, hyperkeratosis, and inflammation.</title>
        <authorList>
            <person name="Fischer H."/>
            <person name="Langbein L."/>
            <person name="Reichelt J."/>
            <person name="Praetzel-Wunder S."/>
            <person name="Buchberger M."/>
            <person name="Ghannadan M."/>
            <person name="Tschachler E."/>
            <person name="Eckhart L."/>
        </authorList>
    </citation>
    <scope>FUNCTION</scope>
    <scope>SUBCELLULAR LOCATION</scope>
    <scope>TISSUE SPECIFICITY</scope>
    <scope>DISRUPTION PHENOTYPE</scope>
</reference>
<reference key="10">
    <citation type="journal article" date="2014" name="Mol. Cell. Proteomics">
        <title>Immunoaffinity enrichment and mass spectrometry analysis of protein methylation.</title>
        <authorList>
            <person name="Guo A."/>
            <person name="Gu H."/>
            <person name="Zhou J."/>
            <person name="Mulhern D."/>
            <person name="Wang Y."/>
            <person name="Lee K.A."/>
            <person name="Yang V."/>
            <person name="Aguiar M."/>
            <person name="Kornhauser J."/>
            <person name="Jia X."/>
            <person name="Ren J."/>
            <person name="Beausoleil S.A."/>
            <person name="Silva J.C."/>
            <person name="Vemulapalli V."/>
            <person name="Bedford M.T."/>
            <person name="Comb M.J."/>
        </authorList>
    </citation>
    <scope>METHYLATION [LARGE SCALE ANALYSIS] AT ARG-22; ARG-52; ARG-555 AND ARG-593</scope>
    <scope>IDENTIFICATION BY MASS SPECTROMETRY [LARGE SCALE ANALYSIS]</scope>
    <source>
        <tissue>Embryo</tissue>
    </source>
</reference>
<reference key="11">
    <citation type="journal article" date="2016" name="J. Dermatol. Sci.">
        <title>Keratins K2 and K10 are essential for the epidermal integrity of plantar skin.</title>
        <authorList>
            <person name="Fischer H."/>
            <person name="Langbein L."/>
            <person name="Reichelt J."/>
            <person name="Buchberger M."/>
            <person name="Tschachler E."/>
            <person name="Eckhart L."/>
        </authorList>
    </citation>
    <scope>FUNCTION</scope>
    <scope>TISSUE SPECIFICITY</scope>
    <scope>DISRUPTION PHENOTYPE</scope>
</reference>
<reference evidence="13" key="12">
    <citation type="journal article" date="2003" name="Genes Dev.">
        <title>Genetics of dark skin in mice.</title>
        <authorList>
            <person name="Fitch K.R."/>
            <person name="McGowan K.A."/>
            <person name="van Raamsdonk C.D."/>
            <person name="Fuchs H."/>
            <person name="Lee D."/>
            <person name="Puech A."/>
            <person name="Herault Y."/>
            <person name="Threadgill D.W."/>
            <person name="Hrabe de Angelis M."/>
            <person name="Barsh G.S."/>
        </authorList>
    </citation>
    <scope>VARIANT IBS PRO-500</scope>
</reference>
<comment type="function">
    <text evidence="2 9 10">Probably contributes to terminal cornification (By similarity). Associated with keratinocyte activation, proliferation and keratinization (By similarity). Required for maintenance of corneocytes and keratin filaments in suprabasal keratinocytes in the epidermis of the ear, potentially via moderation of expression and localization of keratins and their partner proteins (PubMed:24751727). Plays a role in the establishment of the epidermal barrier on plantar skin (PubMed:26603179).</text>
</comment>
<comment type="subunit">
    <text evidence="12 13">Heterotetramer of two type I and two type II keratins. Associates with KRT10.</text>
</comment>
<comment type="subcellular location">
    <subcellularLocation>
        <location evidence="9">Cytoplasm</location>
    </subcellularLocation>
</comment>
<comment type="tissue specificity">
    <text evidence="7 8 9 10 11">Expressed predominantly in the suprabasal layers of the plantar epidermis outside of the footpads (at protein level) (PubMed:26603179). Expressed in the suprabasal layers of the interfollicular epidermis of the ear, in the interscale regions distant from the hair follicles in the tail, and in the soles of the footpads (at protein level) (PubMed:24751727). Expressed mainly in the middle spinous and granular cells of the epidermis of adult tail, nipple and footsole skin. Also found in ear.</text>
</comment>
<comment type="developmental stage">
    <text evidence="8">Induction occurs during the first 2 weeks after birth, being first observed in the epidermis of tail then the footpad and later in the ear.</text>
</comment>
<comment type="disease">
    <text>Defects in Krt2 are a cause of ichthyosis bullosa of siemens (IBS). IBS is a rare autosomal dominant disorder displaying a type of epidermolytic hyperkeratosis characterized by extensive blistering from birth. Hyperkeratoses and shedding of the outer layers of the epidermis (molting) are observed in later weeks.</text>
</comment>
<comment type="disruption phenotype">
    <text evidence="9 10">Mice are viable and display no differences in size and body weight (PubMed:24751727, PubMed:26603179). Scaly skin and increased pigmentation on ears and hyperkeratotic calluses on the soles and toe pads within 6 weeks of birth (PubMed:24751727, PubMed:26603179). Prominent acanthosis, orthokeratotic hyperkeratosis in the epidermis of the ear and to a lesser extent in the epidermis of the tail and the palm skin caused by an increase in cell proliferation and thicker granular layer (PubMed:24751727). Keratinocyte differentiation is disorganized, large coalescent granules are accumulated, and cytolysis is evidence in the ear skin (PubMed:24751727). Increase in defective corneocytes and an increase in transepidermal water loss in ear skin (PubMed:24751727). Suprabasal keratinocytes contain distinct spongy clumps of Krt10 filaments (PubMed:24751727). Increase in Tslp and Il18 expression, and abundance of T-cells and mast cells in ear skin (PubMed:24751727). Increase in expression of Krt1, Krt10, Krt16, Flg and Loricrin in the ear epidermis (PubMed:24751727). Krt1, Krt5, Krt10, Krt16, Flg and Loricrin all show disordered localization within the ear epidermis (PubMed:24751727). Krt10 specifically show aggregation within the cytoplasm in epidermal cells of the ear (PubMed:24751727). Show no epidermal aberrations of the footpads (PubMed:26603179). Double knockout mice of KRT2 and KRT10 are viable and display no differences in size and body weight (PubMed:26603179). Show a more severe plantar epidermis phenotype as in single KRT2 knockout mice (PubMed:26603179).</text>
</comment>
<comment type="miscellaneous">
    <text evidence="13">There are two types of cytoskeletal and microfibrillar keratin: I (acidic; 40-55 kDa) and II (neutral to basic; 56-70 kDa).</text>
</comment>
<comment type="similarity">
    <text evidence="4">Belongs to the intermediate filament family.</text>
</comment>
<organism>
    <name type="scientific">Mus musculus</name>
    <name type="common">Mouse</name>
    <dbReference type="NCBI Taxonomy" id="10090"/>
    <lineage>
        <taxon>Eukaryota</taxon>
        <taxon>Metazoa</taxon>
        <taxon>Chordata</taxon>
        <taxon>Craniata</taxon>
        <taxon>Vertebrata</taxon>
        <taxon>Euteleostomi</taxon>
        <taxon>Mammalia</taxon>
        <taxon>Eutheria</taxon>
        <taxon>Euarchontoglires</taxon>
        <taxon>Glires</taxon>
        <taxon>Rodentia</taxon>
        <taxon>Myomorpha</taxon>
        <taxon>Muroidea</taxon>
        <taxon>Muridae</taxon>
        <taxon>Murinae</taxon>
        <taxon>Mus</taxon>
        <taxon>Mus</taxon>
    </lineage>
</organism>
<dbReference type="EMBL" id="X74784">
    <property type="protein sequence ID" value="CAA52788.1"/>
    <property type="molecule type" value="mRNA"/>
</dbReference>
<dbReference type="EMBL" id="AK132476">
    <property type="protein sequence ID" value="BAE21186.1"/>
    <property type="molecule type" value="mRNA"/>
</dbReference>
<dbReference type="EMBL" id="AK161078">
    <property type="protein sequence ID" value="BAE36187.1"/>
    <property type="molecule type" value="mRNA"/>
</dbReference>
<dbReference type="EMBL" id="AK161098">
    <property type="protein sequence ID" value="BAE36194.1"/>
    <property type="molecule type" value="mRNA"/>
</dbReference>
<dbReference type="EMBL" id="BC120485">
    <property type="protein sequence ID" value="AAI20486.1"/>
    <property type="molecule type" value="mRNA"/>
</dbReference>
<dbReference type="CCDS" id="CCDS37220.1"/>
<dbReference type="RefSeq" id="NP_034798.2">
    <property type="nucleotide sequence ID" value="NM_010668.2"/>
</dbReference>
<dbReference type="SMR" id="Q3TTY5"/>
<dbReference type="BioGRID" id="201033">
    <property type="interactions" value="15"/>
</dbReference>
<dbReference type="FunCoup" id="Q3TTY5">
    <property type="interactions" value="54"/>
</dbReference>
<dbReference type="IntAct" id="Q3TTY5">
    <property type="interactions" value="2"/>
</dbReference>
<dbReference type="STRING" id="10090.ENSMUSP00000023712"/>
<dbReference type="GlyGen" id="Q3TTY5">
    <property type="glycosylation" value="11 sites, 1 O-linked glycan (11 sites)"/>
</dbReference>
<dbReference type="iPTMnet" id="Q3TTY5"/>
<dbReference type="PhosphoSitePlus" id="Q3TTY5"/>
<dbReference type="SwissPalm" id="Q3TTY5"/>
<dbReference type="CPTAC" id="non-CPTAC-3922"/>
<dbReference type="jPOST" id="Q3TTY5"/>
<dbReference type="PaxDb" id="10090-ENSMUSP00000023712"/>
<dbReference type="ProteomicsDB" id="269145"/>
<dbReference type="Antibodypedia" id="1398">
    <property type="antibodies" value="289 antibodies from 30 providers"/>
</dbReference>
<dbReference type="DNASU" id="16681"/>
<dbReference type="Ensembl" id="ENSMUST00000023712.8">
    <property type="protein sequence ID" value="ENSMUSP00000023712.8"/>
    <property type="gene ID" value="ENSMUSG00000064201.9"/>
</dbReference>
<dbReference type="GeneID" id="16681"/>
<dbReference type="KEGG" id="mmu:16681"/>
<dbReference type="UCSC" id="uc007xub.1">
    <property type="organism name" value="mouse"/>
</dbReference>
<dbReference type="AGR" id="MGI:96699"/>
<dbReference type="CTD" id="3849"/>
<dbReference type="MGI" id="MGI:96699">
    <property type="gene designation" value="Krt2"/>
</dbReference>
<dbReference type="VEuPathDB" id="HostDB:ENSMUSG00000064201"/>
<dbReference type="eggNOG" id="ENOG502QTM6">
    <property type="taxonomic scope" value="Eukaryota"/>
</dbReference>
<dbReference type="GeneTree" id="ENSGT00940000162573"/>
<dbReference type="HOGENOM" id="CLU_012560_6_0_1"/>
<dbReference type="InParanoid" id="Q3TTY5"/>
<dbReference type="OMA" id="SCQITCK"/>
<dbReference type="OrthoDB" id="9451703at2759"/>
<dbReference type="PhylomeDB" id="Q3TTY5"/>
<dbReference type="TreeFam" id="TF317854"/>
<dbReference type="Reactome" id="R-MMU-6805567">
    <property type="pathway name" value="Keratinization"/>
</dbReference>
<dbReference type="Reactome" id="R-MMU-6809371">
    <property type="pathway name" value="Formation of the cornified envelope"/>
</dbReference>
<dbReference type="BioGRID-ORCS" id="16681">
    <property type="hits" value="1 hit in 75 CRISPR screens"/>
</dbReference>
<dbReference type="PRO" id="PR:Q3TTY5"/>
<dbReference type="Proteomes" id="UP000000589">
    <property type="component" value="Chromosome 15"/>
</dbReference>
<dbReference type="RNAct" id="Q3TTY5">
    <property type="molecule type" value="protein"/>
</dbReference>
<dbReference type="Bgee" id="ENSMUSG00000064201">
    <property type="expression patterns" value="Expressed in tail skin and 40 other cell types or tissues"/>
</dbReference>
<dbReference type="GO" id="GO:0001533">
    <property type="term" value="C:cornified envelope"/>
    <property type="evidence" value="ECO:0007669"/>
    <property type="project" value="Ensembl"/>
</dbReference>
<dbReference type="GO" id="GO:0005737">
    <property type="term" value="C:cytoplasm"/>
    <property type="evidence" value="ECO:0000314"/>
    <property type="project" value="UniProtKB"/>
</dbReference>
<dbReference type="GO" id="GO:0005829">
    <property type="term" value="C:cytosol"/>
    <property type="evidence" value="ECO:0007669"/>
    <property type="project" value="Ensembl"/>
</dbReference>
<dbReference type="GO" id="GO:0045095">
    <property type="term" value="C:keratin filament"/>
    <property type="evidence" value="ECO:0000314"/>
    <property type="project" value="MGI"/>
</dbReference>
<dbReference type="GO" id="GO:0008092">
    <property type="term" value="F:cytoskeletal protein binding"/>
    <property type="evidence" value="ECO:0000315"/>
    <property type="project" value="MGI"/>
</dbReference>
<dbReference type="GO" id="GO:0030280">
    <property type="term" value="F:structural constituent of skin epidermis"/>
    <property type="evidence" value="ECO:0000315"/>
    <property type="project" value="MGI"/>
</dbReference>
<dbReference type="GO" id="GO:0008544">
    <property type="term" value="P:epidermis development"/>
    <property type="evidence" value="ECO:0000315"/>
    <property type="project" value="MGI"/>
</dbReference>
<dbReference type="GO" id="GO:0045109">
    <property type="term" value="P:intermediate filament organization"/>
    <property type="evidence" value="ECO:0000315"/>
    <property type="project" value="MGI"/>
</dbReference>
<dbReference type="GO" id="GO:0031424">
    <property type="term" value="P:keratinization"/>
    <property type="evidence" value="ECO:0007669"/>
    <property type="project" value="Ensembl"/>
</dbReference>
<dbReference type="GO" id="GO:0032980">
    <property type="term" value="P:keratinocyte activation"/>
    <property type="evidence" value="ECO:0007669"/>
    <property type="project" value="Ensembl"/>
</dbReference>
<dbReference type="GO" id="GO:0003334">
    <property type="term" value="P:keratinocyte development"/>
    <property type="evidence" value="ECO:0000315"/>
    <property type="project" value="MGI"/>
</dbReference>
<dbReference type="GO" id="GO:0051546">
    <property type="term" value="P:keratinocyte migration"/>
    <property type="evidence" value="ECO:0007669"/>
    <property type="project" value="Ensembl"/>
</dbReference>
<dbReference type="GO" id="GO:0043616">
    <property type="term" value="P:keratinocyte proliferation"/>
    <property type="evidence" value="ECO:0007669"/>
    <property type="project" value="Ensembl"/>
</dbReference>
<dbReference type="GO" id="GO:0045684">
    <property type="term" value="P:positive regulation of epidermis development"/>
    <property type="evidence" value="ECO:0000315"/>
    <property type="project" value="UniProtKB"/>
</dbReference>
<dbReference type="FunFam" id="1.20.5.1160:FF:000001">
    <property type="entry name" value="Keratin type II"/>
    <property type="match status" value="1"/>
</dbReference>
<dbReference type="FunFam" id="1.20.5.170:FF:000004">
    <property type="entry name" value="Keratin, type II cytoskeletal 5"/>
    <property type="match status" value="1"/>
</dbReference>
<dbReference type="FunFam" id="1.20.5.500:FF:000001">
    <property type="entry name" value="Type II keratin 23"/>
    <property type="match status" value="1"/>
</dbReference>
<dbReference type="Gene3D" id="1.20.5.170">
    <property type="match status" value="1"/>
</dbReference>
<dbReference type="Gene3D" id="1.20.5.500">
    <property type="entry name" value="Single helix bin"/>
    <property type="match status" value="1"/>
</dbReference>
<dbReference type="Gene3D" id="1.20.5.1160">
    <property type="entry name" value="Vasodilator-stimulated phosphoprotein"/>
    <property type="match status" value="1"/>
</dbReference>
<dbReference type="InterPro" id="IPR018039">
    <property type="entry name" value="IF_conserved"/>
</dbReference>
<dbReference type="InterPro" id="IPR039008">
    <property type="entry name" value="IF_rod_dom"/>
</dbReference>
<dbReference type="InterPro" id="IPR032444">
    <property type="entry name" value="Keratin_2_head"/>
</dbReference>
<dbReference type="InterPro" id="IPR003054">
    <property type="entry name" value="Keratin_II"/>
</dbReference>
<dbReference type="PANTHER" id="PTHR45616">
    <property type="entry name" value="GATA-TYPE DOMAIN-CONTAINING PROTEIN"/>
    <property type="match status" value="1"/>
</dbReference>
<dbReference type="PANTHER" id="PTHR45616:SF14">
    <property type="entry name" value="KERATIN, TYPE II CYTOSKELETAL 2 EPIDERMAL"/>
    <property type="match status" value="1"/>
</dbReference>
<dbReference type="Pfam" id="PF00038">
    <property type="entry name" value="Filament"/>
    <property type="match status" value="1"/>
</dbReference>
<dbReference type="Pfam" id="PF16208">
    <property type="entry name" value="Keratin_2_head"/>
    <property type="match status" value="2"/>
</dbReference>
<dbReference type="PRINTS" id="PR01276">
    <property type="entry name" value="TYPE2KERATIN"/>
</dbReference>
<dbReference type="SMART" id="SM01391">
    <property type="entry name" value="Filament"/>
    <property type="match status" value="1"/>
</dbReference>
<dbReference type="SUPFAM" id="SSF64593">
    <property type="entry name" value="Intermediate filament protein, coiled coil region"/>
    <property type="match status" value="3"/>
</dbReference>
<dbReference type="PROSITE" id="PS00226">
    <property type="entry name" value="IF_ROD_1"/>
    <property type="match status" value="1"/>
</dbReference>
<dbReference type="PROSITE" id="PS51842">
    <property type="entry name" value="IF_ROD_2"/>
    <property type="match status" value="1"/>
</dbReference>
<evidence type="ECO:0000250" key="1">
    <source>
        <dbReference type="UniProtKB" id="P04104"/>
    </source>
</evidence>
<evidence type="ECO:0000250" key="2">
    <source>
        <dbReference type="UniProtKB" id="P35908"/>
    </source>
</evidence>
<evidence type="ECO:0000255" key="3"/>
<evidence type="ECO:0000255" key="4">
    <source>
        <dbReference type="PROSITE-ProRule" id="PRU01188"/>
    </source>
</evidence>
<evidence type="ECO:0000256" key="5">
    <source>
        <dbReference type="SAM" id="MobiDB-lite"/>
    </source>
</evidence>
<evidence type="ECO:0000269" key="6">
    <source>
    </source>
</evidence>
<evidence type="ECO:0000269" key="7">
    <source>
    </source>
</evidence>
<evidence type="ECO:0000269" key="8">
    <source>
    </source>
</evidence>
<evidence type="ECO:0000269" key="9">
    <source>
    </source>
</evidence>
<evidence type="ECO:0000269" key="10">
    <source>
    </source>
</evidence>
<evidence type="ECO:0000269" key="11">
    <source>
    </source>
</evidence>
<evidence type="ECO:0000269" key="12">
    <source>
    </source>
</evidence>
<evidence type="ECO:0000305" key="13"/>
<evidence type="ECO:0000312" key="14">
    <source>
        <dbReference type="EMBL" id="AAI20486.1"/>
    </source>
</evidence>
<evidence type="ECO:0000312" key="15">
    <source>
        <dbReference type="EMBL" id="BAE21186.1"/>
    </source>
</evidence>
<evidence type="ECO:0000312" key="16">
    <source>
        <dbReference type="EMBL" id="BAE36187.1"/>
    </source>
</evidence>
<evidence type="ECO:0000312" key="17">
    <source>
        <dbReference type="EMBL" id="CAA52788.1"/>
    </source>
</evidence>
<evidence type="ECO:0000312" key="18">
    <source>
        <dbReference type="MGI" id="MGI:96699"/>
    </source>
</evidence>
<evidence type="ECO:0007744" key="19">
    <source>
    </source>
</evidence>
<feature type="chain" id="PRO_0000283763" description="Keratin, type II cytoskeletal 2 epidermal">
    <location>
        <begin position="1"/>
        <end position="707"/>
    </location>
</feature>
<feature type="domain" description="IF rod" evidence="4">
    <location>
        <begin position="199"/>
        <end position="512"/>
    </location>
</feature>
<feature type="region of interest" description="Head" evidence="3">
    <location>
        <begin position="1"/>
        <end position="198"/>
    </location>
</feature>
<feature type="region of interest" description="Disordered" evidence="5">
    <location>
        <begin position="1"/>
        <end position="20"/>
    </location>
</feature>
<feature type="region of interest" description="Disordered" evidence="5">
    <location>
        <begin position="29"/>
        <end position="59"/>
    </location>
</feature>
<feature type="region of interest" description="Coil 1A" evidence="3">
    <location>
        <begin position="199"/>
        <end position="234"/>
    </location>
</feature>
<feature type="region of interest" description="Linker 1" evidence="3">
    <location>
        <begin position="235"/>
        <end position="253"/>
    </location>
</feature>
<feature type="region of interest" description="Coil 1B" evidence="3">
    <location>
        <begin position="254"/>
        <end position="345"/>
    </location>
</feature>
<feature type="region of interest" description="Linker 12" evidence="3">
    <location>
        <begin position="346"/>
        <end position="369"/>
    </location>
</feature>
<feature type="region of interest" description="Coil 2" evidence="3">
    <location>
        <begin position="370"/>
        <end position="508"/>
    </location>
</feature>
<feature type="region of interest" description="Tail" evidence="3">
    <location>
        <begin position="509"/>
        <end position="707"/>
    </location>
</feature>
<feature type="region of interest" description="Disordered" evidence="5">
    <location>
        <begin position="531"/>
        <end position="707"/>
    </location>
</feature>
<feature type="compositionally biased region" description="Low complexity" evidence="5">
    <location>
        <begin position="29"/>
        <end position="38"/>
    </location>
</feature>
<feature type="compositionally biased region" description="Gly residues" evidence="5">
    <location>
        <begin position="539"/>
        <end position="700"/>
    </location>
</feature>
<feature type="site" description="Stutter" evidence="3">
    <location>
        <position position="450"/>
    </location>
</feature>
<feature type="modified residue" description="Asymmetric dimethylarginine" evidence="19">
    <location>
        <position position="22"/>
    </location>
</feature>
<feature type="modified residue" description="Phosphoserine" evidence="1">
    <location>
        <position position="25"/>
    </location>
</feature>
<feature type="modified residue" description="Phosphoserine" evidence="1">
    <location>
        <position position="28"/>
    </location>
</feature>
<feature type="modified residue" description="Omega-N-methylarginine" evidence="19">
    <location>
        <position position="52"/>
    </location>
</feature>
<feature type="modified residue" description="Phosphoserine" evidence="2">
    <location>
        <position position="64"/>
    </location>
</feature>
<feature type="modified residue" description="Omega-N-methylarginine" evidence="19">
    <location>
        <position position="555"/>
    </location>
</feature>
<feature type="modified residue" description="Omega-N-methylarginine" evidence="19">
    <location>
        <position position="593"/>
    </location>
</feature>
<feature type="modified residue" description="Omega-N-methylarginine" evidence="1">
    <location>
        <position position="607"/>
    </location>
</feature>
<feature type="modified residue" description="Omega-N-methylarginine" evidence="1">
    <location>
        <position position="675"/>
    </location>
</feature>
<feature type="sequence variant" description="In IBS." evidence="6">
    <original>T</original>
    <variation>P</variation>
    <location>
        <position position="500"/>
    </location>
</feature>
<feature type="sequence conflict" description="In Ref. 2; CAA52788." evidence="13" ref="2">
    <original>DVGSRTTNL</original>
    <variation>ACRQPHHKP</variation>
    <location>
        <begin position="238"/>
        <end position="246"/>
    </location>
</feature>
<feature type="sequence conflict" description="In Ref. 2; CAA52788." evidence="13" ref="2">
    <original>N</original>
    <variation>T</variation>
    <location>
        <position position="361"/>
    </location>
</feature>
<feature type="sequence conflict" description="In Ref. 2; CAA52788." evidence="13" ref="2">
    <original>K</original>
    <variation>I</variation>
    <location>
        <position position="439"/>
    </location>
</feature>
<feature type="sequence conflict" description="In Ref. 2; CAA52788." evidence="13" ref="2">
    <original>R</original>
    <variation>H</variation>
    <location>
        <position position="451"/>
    </location>
</feature>
<feature type="sequence conflict" description="In Ref. 2; CAA52788." evidence="13" ref="2">
    <original>V</original>
    <variation>M</variation>
    <location>
        <position position="533"/>
    </location>
</feature>
<feature type="sequence conflict" description="In Ref. 4; AAI20486." evidence="13" ref="4">
    <location>
        <position position="562"/>
    </location>
</feature>
<feature type="sequence conflict" description="In Ref. 2; CAA52788." evidence="13" ref="2">
    <original>T</original>
    <variation>S</variation>
    <location>
        <position position="564"/>
    </location>
</feature>
<feature type="sequence conflict" description="In Ref. 4; AAI20486." evidence="13" ref="4">
    <original>G</original>
    <variation>GG</variation>
    <location>
        <position position="625"/>
    </location>
</feature>
<feature type="sequence conflict" description="In Ref. 2; CAA52788." evidence="13" ref="2">
    <original>V</original>
    <variation>A</variation>
    <location>
        <position position="641"/>
    </location>
</feature>
<accession>Q3TTY5</accession>
<accession>Q0VBW1</accession>
<accession>Q61869</accession>
<protein>
    <recommendedName>
        <fullName>Keratin, type II cytoskeletal 2 epidermal</fullName>
    </recommendedName>
    <alternativeName>
        <fullName>Cytokeratin-2e</fullName>
        <shortName>CK-2e</shortName>
    </alternativeName>
    <alternativeName>
        <fullName>Epithelial keratin-2e</fullName>
    </alternativeName>
    <alternativeName>
        <fullName>Keratin-2 epidermis</fullName>
    </alternativeName>
    <alternativeName>
        <fullName>Keratin-2e</fullName>
        <shortName>K2e</shortName>
    </alternativeName>
    <alternativeName>
        <fullName>Type-II keratin Kb2</fullName>
    </alternativeName>
</protein>
<sequence>MSCQISCRSRRGGGGGGGGGFRGFSSGSAVVSGGSRRSNTSFSCISRHGGGRGGSGGGGFGSQSLVGLGGYKSISSSVAGNSGGYGGSSFGGSSGFGGGRGFGGGQGFGGSGGFGGGSGFGGGQGFGGGSRFGGGSGFGGGGFGGGSFGGGRFGGGPGGFGGPGGFPGGGIHEVSVNQSLLQPLDVKVDPEIQNVKSQEREQIKTLNNKFASFIDKVRFLEQQNQVLRTKWELLQQLDVGSRTTNLDPIFQAYIGMLKKQVDRLSAERTSQESELNNMQDLVEDFKKKYEDEINKRTSAENDFVTIKKDVDSCYMDKTELQARLDILAQEVNFLRTLYDAELSQLQQDVTDTNVILSMDNNRNLDLDSIIAEVQNQYEMIAHKSKAESEELYHSKYEELQVTAVKHGDSLKEIKMEISELNRTIQRLQGEISHVKKQCKGVQDSIADAEQRGEHAIKDARGKLTDLEEALQQCREDLARLLRDYQELMNTKLSLDVEIATYRKLLEGEECRMSGDFSDNVSVSITSSTISSSVASKTGFGSGGQSSGGRGSYGGRGGGGGGGSTYGSGGRSSGSRGSGSGSGGGGYSSGGGSRGGSGGGYGSGGGSRGGSGGGYGSGGGSGSGGGYSSGGGSRGGSGGGGVSSGGGSRGGSSSGGGSRGGSSSGGGGYSSGGGSRGGSSSGGAGSSSEKGGSGSGEGCGSGVTFSFR</sequence>
<keyword id="KW-0175">Coiled coil</keyword>
<keyword id="KW-0963">Cytoplasm</keyword>
<keyword id="KW-0903">Direct protein sequencing</keyword>
<keyword id="KW-0225">Disease variant</keyword>
<keyword id="KW-0977">Ichthyosis</keyword>
<keyword id="KW-0403">Intermediate filament</keyword>
<keyword id="KW-0416">Keratin</keyword>
<keyword id="KW-0488">Methylation</keyword>
<keyword id="KW-0597">Phosphoprotein</keyword>
<keyword id="KW-1185">Reference proteome</keyword>
<name>K22E_MOUSE</name>
<proteinExistence type="evidence at protein level"/>
<gene>
    <name evidence="14" type="primary">Krt2</name>
    <name type="synonym">K2e</name>
    <name evidence="18" type="synonym">Krt2-17</name>
    <name evidence="2" type="synonym">Krt2a</name>
</gene>